<proteinExistence type="inferred from homology"/>
<protein>
    <recommendedName>
        <fullName evidence="1">Small ribosomal subunit protein uS9</fullName>
    </recommendedName>
    <alternativeName>
        <fullName evidence="3">30S ribosomal protein S9</fullName>
    </alternativeName>
</protein>
<sequence length="166" mass="17962">MSDTTNEVEETYEVDEQGIAYSSESAPSADAPLRPATIAPANATGRRKEAVARVRLVPGTGEWTVNGRTLDSYFPNKLHQQVVNEPFVTTQLEGRFDVIARIHGGGITGQAGALRLGVARALNAVDVEANRPSLKKAGLLTRDARVIERKKAGLKKARKAPQFSKR</sequence>
<dbReference type="EMBL" id="CP000509">
    <property type="protein sequence ID" value="ABL80413.1"/>
    <property type="molecule type" value="Genomic_DNA"/>
</dbReference>
<dbReference type="RefSeq" id="WP_011754362.1">
    <property type="nucleotide sequence ID" value="NC_008699.1"/>
</dbReference>
<dbReference type="SMR" id="A1SF28"/>
<dbReference type="STRING" id="196162.Noca_0890"/>
<dbReference type="KEGG" id="nca:Noca_0890"/>
<dbReference type="eggNOG" id="COG0103">
    <property type="taxonomic scope" value="Bacteria"/>
</dbReference>
<dbReference type="HOGENOM" id="CLU_046483_2_0_11"/>
<dbReference type="OrthoDB" id="9803965at2"/>
<dbReference type="Proteomes" id="UP000000640">
    <property type="component" value="Chromosome"/>
</dbReference>
<dbReference type="GO" id="GO:0005737">
    <property type="term" value="C:cytoplasm"/>
    <property type="evidence" value="ECO:0007669"/>
    <property type="project" value="UniProtKB-ARBA"/>
</dbReference>
<dbReference type="GO" id="GO:0015935">
    <property type="term" value="C:small ribosomal subunit"/>
    <property type="evidence" value="ECO:0007669"/>
    <property type="project" value="TreeGrafter"/>
</dbReference>
<dbReference type="GO" id="GO:0003723">
    <property type="term" value="F:RNA binding"/>
    <property type="evidence" value="ECO:0007669"/>
    <property type="project" value="TreeGrafter"/>
</dbReference>
<dbReference type="GO" id="GO:0003735">
    <property type="term" value="F:structural constituent of ribosome"/>
    <property type="evidence" value="ECO:0007669"/>
    <property type="project" value="InterPro"/>
</dbReference>
<dbReference type="GO" id="GO:0006412">
    <property type="term" value="P:translation"/>
    <property type="evidence" value="ECO:0007669"/>
    <property type="project" value="UniProtKB-UniRule"/>
</dbReference>
<dbReference type="FunFam" id="3.30.230.10:FF:000001">
    <property type="entry name" value="30S ribosomal protein S9"/>
    <property type="match status" value="1"/>
</dbReference>
<dbReference type="Gene3D" id="3.30.230.10">
    <property type="match status" value="1"/>
</dbReference>
<dbReference type="HAMAP" id="MF_00532_B">
    <property type="entry name" value="Ribosomal_uS9_B"/>
    <property type="match status" value="1"/>
</dbReference>
<dbReference type="InterPro" id="IPR020568">
    <property type="entry name" value="Ribosomal_Su5_D2-typ_SF"/>
</dbReference>
<dbReference type="InterPro" id="IPR000754">
    <property type="entry name" value="Ribosomal_uS9"/>
</dbReference>
<dbReference type="InterPro" id="IPR023035">
    <property type="entry name" value="Ribosomal_uS9_bac/plastid"/>
</dbReference>
<dbReference type="InterPro" id="IPR020574">
    <property type="entry name" value="Ribosomal_uS9_CS"/>
</dbReference>
<dbReference type="InterPro" id="IPR014721">
    <property type="entry name" value="Ribsml_uS5_D2-typ_fold_subgr"/>
</dbReference>
<dbReference type="NCBIfam" id="NF001099">
    <property type="entry name" value="PRK00132.1"/>
    <property type="match status" value="1"/>
</dbReference>
<dbReference type="PANTHER" id="PTHR21569">
    <property type="entry name" value="RIBOSOMAL PROTEIN S9"/>
    <property type="match status" value="1"/>
</dbReference>
<dbReference type="PANTHER" id="PTHR21569:SF1">
    <property type="entry name" value="SMALL RIBOSOMAL SUBUNIT PROTEIN US9M"/>
    <property type="match status" value="1"/>
</dbReference>
<dbReference type="Pfam" id="PF00380">
    <property type="entry name" value="Ribosomal_S9"/>
    <property type="match status" value="1"/>
</dbReference>
<dbReference type="SUPFAM" id="SSF54211">
    <property type="entry name" value="Ribosomal protein S5 domain 2-like"/>
    <property type="match status" value="1"/>
</dbReference>
<dbReference type="PROSITE" id="PS00360">
    <property type="entry name" value="RIBOSOMAL_S9"/>
    <property type="match status" value="1"/>
</dbReference>
<feature type="chain" id="PRO_1000051273" description="Small ribosomal subunit protein uS9">
    <location>
        <begin position="1"/>
        <end position="166"/>
    </location>
</feature>
<feature type="region of interest" description="Disordered" evidence="2">
    <location>
        <begin position="1"/>
        <end position="45"/>
    </location>
</feature>
<feature type="compositionally biased region" description="Acidic residues" evidence="2">
    <location>
        <begin position="1"/>
        <end position="16"/>
    </location>
</feature>
<keyword id="KW-1185">Reference proteome</keyword>
<keyword id="KW-0687">Ribonucleoprotein</keyword>
<keyword id="KW-0689">Ribosomal protein</keyword>
<organism>
    <name type="scientific">Nocardioides sp. (strain ATCC BAA-499 / JS614)</name>
    <dbReference type="NCBI Taxonomy" id="196162"/>
    <lineage>
        <taxon>Bacteria</taxon>
        <taxon>Bacillati</taxon>
        <taxon>Actinomycetota</taxon>
        <taxon>Actinomycetes</taxon>
        <taxon>Propionibacteriales</taxon>
        <taxon>Nocardioidaceae</taxon>
        <taxon>Nocardioides</taxon>
    </lineage>
</organism>
<comment type="similarity">
    <text evidence="1">Belongs to the universal ribosomal protein uS9 family.</text>
</comment>
<name>RS9_NOCSJ</name>
<accession>A1SF28</accession>
<evidence type="ECO:0000255" key="1">
    <source>
        <dbReference type="HAMAP-Rule" id="MF_00532"/>
    </source>
</evidence>
<evidence type="ECO:0000256" key="2">
    <source>
        <dbReference type="SAM" id="MobiDB-lite"/>
    </source>
</evidence>
<evidence type="ECO:0000305" key="3"/>
<reference key="1">
    <citation type="submission" date="2006-12" db="EMBL/GenBank/DDBJ databases">
        <title>Complete sequence of chromosome 1 of Nocardioides sp. JS614.</title>
        <authorList>
            <person name="Copeland A."/>
            <person name="Lucas S."/>
            <person name="Lapidus A."/>
            <person name="Barry K."/>
            <person name="Detter J.C."/>
            <person name="Glavina del Rio T."/>
            <person name="Hammon N."/>
            <person name="Israni S."/>
            <person name="Dalin E."/>
            <person name="Tice H."/>
            <person name="Pitluck S."/>
            <person name="Thompson L.S."/>
            <person name="Brettin T."/>
            <person name="Bruce D."/>
            <person name="Han C."/>
            <person name="Tapia R."/>
            <person name="Schmutz J."/>
            <person name="Larimer F."/>
            <person name="Land M."/>
            <person name="Hauser L."/>
            <person name="Kyrpides N."/>
            <person name="Kim E."/>
            <person name="Mattes T."/>
            <person name="Gossett J."/>
            <person name="Richardson P."/>
        </authorList>
    </citation>
    <scope>NUCLEOTIDE SEQUENCE [LARGE SCALE GENOMIC DNA]</scope>
    <source>
        <strain>ATCC BAA-499 / JS614</strain>
    </source>
</reference>
<gene>
    <name evidence="1" type="primary">rpsI</name>
    <name type="ordered locus">Noca_0890</name>
</gene>